<reference key="1">
    <citation type="submission" date="2007-02" db="EMBL/GenBank/DDBJ databases">
        <title>Complete sequence of chromosome of Yersinia pestis Pestoides F.</title>
        <authorList>
            <consortium name="US DOE Joint Genome Institute"/>
            <person name="Copeland A."/>
            <person name="Lucas S."/>
            <person name="Lapidus A."/>
            <person name="Barry K."/>
            <person name="Detter J.C."/>
            <person name="Glavina del Rio T."/>
            <person name="Hammon N."/>
            <person name="Israni S."/>
            <person name="Dalin E."/>
            <person name="Tice H."/>
            <person name="Pitluck S."/>
            <person name="Di Bartolo G."/>
            <person name="Chain P."/>
            <person name="Malfatti S."/>
            <person name="Shin M."/>
            <person name="Vergez L."/>
            <person name="Schmutz J."/>
            <person name="Larimer F."/>
            <person name="Land M."/>
            <person name="Hauser L."/>
            <person name="Worsham P."/>
            <person name="Chu M."/>
            <person name="Bearden S."/>
            <person name="Garcia E."/>
            <person name="Richardson P."/>
        </authorList>
    </citation>
    <scope>NUCLEOTIDE SEQUENCE [LARGE SCALE GENOMIC DNA]</scope>
    <source>
        <strain>Pestoides F</strain>
    </source>
</reference>
<comment type="function">
    <text evidence="1">Catalyzes the formation of the alpha-1,6-glucosidic linkages in glycogen by scission of a 1,4-alpha-linked oligosaccharide from growing alpha-1,4-glucan chains and the subsequent attachment of the oligosaccharide to the alpha-1,6 position.</text>
</comment>
<comment type="catalytic activity">
    <reaction evidence="1">
        <text>Transfers a segment of a (1-&gt;4)-alpha-D-glucan chain to a primary hydroxy group in a similar glucan chain.</text>
        <dbReference type="EC" id="2.4.1.18"/>
    </reaction>
</comment>
<comment type="pathway">
    <text evidence="1">Glycan biosynthesis; glycogen biosynthesis.</text>
</comment>
<comment type="subunit">
    <text evidence="1">Monomer.</text>
</comment>
<comment type="similarity">
    <text evidence="1">Belongs to the glycosyl hydrolase 13 family. GlgB subfamily.</text>
</comment>
<protein>
    <recommendedName>
        <fullName evidence="1">1,4-alpha-glucan branching enzyme GlgB</fullName>
        <ecNumber evidence="1">2.4.1.18</ecNumber>
    </recommendedName>
    <alternativeName>
        <fullName evidence="1">1,4-alpha-D-glucan:1,4-alpha-D-glucan 6-glucosyl-transferase</fullName>
    </alternativeName>
    <alternativeName>
        <fullName evidence="1">Alpha-(1-&gt;4)-glucan branching enzyme</fullName>
    </alternativeName>
    <alternativeName>
        <fullName evidence="1">Glycogen branching enzyme</fullName>
        <shortName evidence="1">BE</shortName>
    </alternativeName>
</protein>
<name>GLGB_YERPP</name>
<proteinExistence type="inferred from homology"/>
<keyword id="KW-0119">Carbohydrate metabolism</keyword>
<keyword id="KW-0320">Glycogen biosynthesis</keyword>
<keyword id="KW-0321">Glycogen metabolism</keyword>
<keyword id="KW-0328">Glycosyltransferase</keyword>
<keyword id="KW-0808">Transferase</keyword>
<gene>
    <name evidence="1" type="primary">glgB</name>
    <name type="ordered locus">YPDSF_3307</name>
</gene>
<sequence length="727" mass="84135">MSVLPDRQVINQLISGHYGDPFSILGMHETSQGLQICALLPDAREVWLVETENGRRIAQLTLEDPRGFFIAQLTRRKKSFRYQFAVTWQENPQIIEDPYRFGPLLQDIDSWLLAEGTHLRPYERLGAHLMSLDGVSGVSFAVWAPNAQRVSVVGDFNFWDGRRHPMRLRRENGIWELFLPGIEAGQLYKFEIIDCHGQVRLKADPYAFEAQMRPETASLISPLPDVVKSSAARQKANDLCSPVSIYEVHLGSWRRHTDNNFWLSYRELADQLVEYVKYMGFTHVELLPINEHPFDGSWGYQPLGLYAPTRRYGTPEDFKAFVAKFHQAGINVILDWVPGHFPSDEHGLSTFDGTALYEYADPREGYHQDWNTLIYNYGRNEVRNYLAGNAFYWMERFGIDALRIDAVASMIYRDYSRAEGQWVPNYYGGRENLEAIAFLRYTNKTIGVERPGSVTMAEESTDFPGVTLPPDIGGLGFNYKWNMGWMHDTLNYMQCDPVHRKYHHNLMTFGMLYAYTENFILPLSHDEVVHGKRSILDRMPGDAWQKFANLRAYYAFMWAHPGKKLLFMGCEFAQGREWNFETSLDWHLLDDENGWHSGVQRLVRDLNHCYRQYAPLYEWDYQPAGFEWLVVDDHENSVFAFLRRDAEGHELIAISNFTPVPRYHYRVGIPQGGHYREVLNSDSAFYCGSNLGNQGGIDSHHVRSHNHEHSLLLTLPPLATIYLLREN</sequence>
<accession>A4TQV2</accession>
<dbReference type="EC" id="2.4.1.18" evidence="1"/>
<dbReference type="EMBL" id="CP000668">
    <property type="protein sequence ID" value="ABP41664.1"/>
    <property type="molecule type" value="Genomic_DNA"/>
</dbReference>
<dbReference type="RefSeq" id="WP_002209500.1">
    <property type="nucleotide sequence ID" value="NZ_CP009715.1"/>
</dbReference>
<dbReference type="SMR" id="A4TQV2"/>
<dbReference type="CAZy" id="CBM48">
    <property type="family name" value="Carbohydrate-Binding Module Family 48"/>
</dbReference>
<dbReference type="CAZy" id="GH13">
    <property type="family name" value="Glycoside Hydrolase Family 13"/>
</dbReference>
<dbReference type="GeneID" id="57974762"/>
<dbReference type="KEGG" id="ypp:YPDSF_3307"/>
<dbReference type="PATRIC" id="fig|386656.14.peg.1029"/>
<dbReference type="UniPathway" id="UPA00164"/>
<dbReference type="GO" id="GO:0005829">
    <property type="term" value="C:cytosol"/>
    <property type="evidence" value="ECO:0007669"/>
    <property type="project" value="TreeGrafter"/>
</dbReference>
<dbReference type="GO" id="GO:0003844">
    <property type="term" value="F:1,4-alpha-glucan branching enzyme activity"/>
    <property type="evidence" value="ECO:0007669"/>
    <property type="project" value="UniProtKB-UniRule"/>
</dbReference>
<dbReference type="GO" id="GO:0043169">
    <property type="term" value="F:cation binding"/>
    <property type="evidence" value="ECO:0007669"/>
    <property type="project" value="InterPro"/>
</dbReference>
<dbReference type="GO" id="GO:0004553">
    <property type="term" value="F:hydrolase activity, hydrolyzing O-glycosyl compounds"/>
    <property type="evidence" value="ECO:0007669"/>
    <property type="project" value="InterPro"/>
</dbReference>
<dbReference type="GO" id="GO:0005978">
    <property type="term" value="P:glycogen biosynthetic process"/>
    <property type="evidence" value="ECO:0007669"/>
    <property type="project" value="UniProtKB-UniRule"/>
</dbReference>
<dbReference type="CDD" id="cd11322">
    <property type="entry name" value="AmyAc_Glg_BE"/>
    <property type="match status" value="1"/>
</dbReference>
<dbReference type="CDD" id="cd02855">
    <property type="entry name" value="E_set_GBE_prok_N"/>
    <property type="match status" value="1"/>
</dbReference>
<dbReference type="FunFam" id="2.60.40.10:FF:000169">
    <property type="entry name" value="1,4-alpha-glucan branching enzyme GlgB"/>
    <property type="match status" value="1"/>
</dbReference>
<dbReference type="FunFam" id="2.60.40.1180:FF:000002">
    <property type="entry name" value="1,4-alpha-glucan branching enzyme GlgB"/>
    <property type="match status" value="1"/>
</dbReference>
<dbReference type="FunFam" id="3.20.20.80:FF:000003">
    <property type="entry name" value="1,4-alpha-glucan branching enzyme GlgB"/>
    <property type="match status" value="1"/>
</dbReference>
<dbReference type="Gene3D" id="3.20.20.80">
    <property type="entry name" value="Glycosidases"/>
    <property type="match status" value="1"/>
</dbReference>
<dbReference type="Gene3D" id="2.60.40.1180">
    <property type="entry name" value="Golgi alpha-mannosidase II"/>
    <property type="match status" value="1"/>
</dbReference>
<dbReference type="Gene3D" id="2.60.40.10">
    <property type="entry name" value="Immunoglobulins"/>
    <property type="match status" value="2"/>
</dbReference>
<dbReference type="HAMAP" id="MF_00685">
    <property type="entry name" value="GlgB"/>
    <property type="match status" value="1"/>
</dbReference>
<dbReference type="InterPro" id="IPR006048">
    <property type="entry name" value="A-amylase/branching_C"/>
</dbReference>
<dbReference type="InterPro" id="IPR037439">
    <property type="entry name" value="Branching_enzy"/>
</dbReference>
<dbReference type="InterPro" id="IPR006407">
    <property type="entry name" value="GlgB"/>
</dbReference>
<dbReference type="InterPro" id="IPR054169">
    <property type="entry name" value="GlgB_N"/>
</dbReference>
<dbReference type="InterPro" id="IPR044143">
    <property type="entry name" value="GlgB_N_E_set_prok"/>
</dbReference>
<dbReference type="InterPro" id="IPR006047">
    <property type="entry name" value="Glyco_hydro_13_cat_dom"/>
</dbReference>
<dbReference type="InterPro" id="IPR004193">
    <property type="entry name" value="Glyco_hydro_13_N"/>
</dbReference>
<dbReference type="InterPro" id="IPR013780">
    <property type="entry name" value="Glyco_hydro_b"/>
</dbReference>
<dbReference type="InterPro" id="IPR017853">
    <property type="entry name" value="Glycoside_hydrolase_SF"/>
</dbReference>
<dbReference type="InterPro" id="IPR013783">
    <property type="entry name" value="Ig-like_fold"/>
</dbReference>
<dbReference type="InterPro" id="IPR014756">
    <property type="entry name" value="Ig_E-set"/>
</dbReference>
<dbReference type="NCBIfam" id="TIGR01515">
    <property type="entry name" value="branching_enzym"/>
    <property type="match status" value="1"/>
</dbReference>
<dbReference type="NCBIfam" id="NF003811">
    <property type="entry name" value="PRK05402.1"/>
    <property type="match status" value="1"/>
</dbReference>
<dbReference type="NCBIfam" id="NF008967">
    <property type="entry name" value="PRK12313.1"/>
    <property type="match status" value="1"/>
</dbReference>
<dbReference type="PANTHER" id="PTHR43651">
    <property type="entry name" value="1,4-ALPHA-GLUCAN-BRANCHING ENZYME"/>
    <property type="match status" value="1"/>
</dbReference>
<dbReference type="PANTHER" id="PTHR43651:SF3">
    <property type="entry name" value="1,4-ALPHA-GLUCAN-BRANCHING ENZYME"/>
    <property type="match status" value="1"/>
</dbReference>
<dbReference type="Pfam" id="PF00128">
    <property type="entry name" value="Alpha-amylase"/>
    <property type="match status" value="1"/>
</dbReference>
<dbReference type="Pfam" id="PF02806">
    <property type="entry name" value="Alpha-amylase_C"/>
    <property type="match status" value="1"/>
</dbReference>
<dbReference type="Pfam" id="PF02922">
    <property type="entry name" value="CBM_48"/>
    <property type="match status" value="1"/>
</dbReference>
<dbReference type="Pfam" id="PF22019">
    <property type="entry name" value="GlgB_N"/>
    <property type="match status" value="1"/>
</dbReference>
<dbReference type="PIRSF" id="PIRSF000463">
    <property type="entry name" value="GlgB"/>
    <property type="match status" value="1"/>
</dbReference>
<dbReference type="SMART" id="SM00642">
    <property type="entry name" value="Aamy"/>
    <property type="match status" value="1"/>
</dbReference>
<dbReference type="SUPFAM" id="SSF51445">
    <property type="entry name" value="(Trans)glycosidases"/>
    <property type="match status" value="1"/>
</dbReference>
<dbReference type="SUPFAM" id="SSF81296">
    <property type="entry name" value="E set domains"/>
    <property type="match status" value="2"/>
</dbReference>
<dbReference type="SUPFAM" id="SSF51011">
    <property type="entry name" value="Glycosyl hydrolase domain"/>
    <property type="match status" value="1"/>
</dbReference>
<evidence type="ECO:0000255" key="1">
    <source>
        <dbReference type="HAMAP-Rule" id="MF_00685"/>
    </source>
</evidence>
<feature type="chain" id="PRO_1000045007" description="1,4-alpha-glucan branching enzyme GlgB">
    <location>
        <begin position="1"/>
        <end position="727"/>
    </location>
</feature>
<feature type="active site" description="Nucleophile" evidence="1">
    <location>
        <position position="405"/>
    </location>
</feature>
<feature type="active site" description="Proton donor" evidence="1">
    <location>
        <position position="458"/>
    </location>
</feature>
<organism>
    <name type="scientific">Yersinia pestis (strain Pestoides F)</name>
    <dbReference type="NCBI Taxonomy" id="386656"/>
    <lineage>
        <taxon>Bacteria</taxon>
        <taxon>Pseudomonadati</taxon>
        <taxon>Pseudomonadota</taxon>
        <taxon>Gammaproteobacteria</taxon>
        <taxon>Enterobacterales</taxon>
        <taxon>Yersiniaceae</taxon>
        <taxon>Yersinia</taxon>
    </lineage>
</organism>